<dbReference type="EC" id="1.5.1.36"/>
<dbReference type="EMBL" id="L41068">
    <property type="protein sequence ID" value="AAC37121.1"/>
    <property type="molecule type" value="Genomic_DNA"/>
</dbReference>
<dbReference type="SMR" id="Q48441"/>
<dbReference type="STRING" id="571.AB185_32455"/>
<dbReference type="eggNOG" id="COG1853">
    <property type="taxonomic scope" value="Bacteria"/>
</dbReference>
<dbReference type="UniPathway" id="UPA00208">
    <property type="reaction ID" value="UER00416"/>
</dbReference>
<dbReference type="GO" id="GO:0036382">
    <property type="term" value="F:flavin reductase (NADH) activity"/>
    <property type="evidence" value="ECO:0007669"/>
    <property type="project" value="UniProtKB-EC"/>
</dbReference>
<dbReference type="GO" id="GO:0010181">
    <property type="term" value="F:FMN binding"/>
    <property type="evidence" value="ECO:0007669"/>
    <property type="project" value="InterPro"/>
</dbReference>
<dbReference type="GO" id="GO:0051287">
    <property type="term" value="F:NAD binding"/>
    <property type="evidence" value="ECO:0007669"/>
    <property type="project" value="InterPro"/>
</dbReference>
<dbReference type="GO" id="GO:0016651">
    <property type="term" value="F:oxidoreductase activity, acting on NAD(P)H"/>
    <property type="evidence" value="ECO:0007669"/>
    <property type="project" value="InterPro"/>
</dbReference>
<dbReference type="GO" id="GO:0042602">
    <property type="term" value="F:riboflavin reductase (NADPH) activity"/>
    <property type="evidence" value="ECO:0007669"/>
    <property type="project" value="TreeGrafter"/>
</dbReference>
<dbReference type="GO" id="GO:0042537">
    <property type="term" value="P:benzene-containing compound metabolic process"/>
    <property type="evidence" value="ECO:0007669"/>
    <property type="project" value="InterPro"/>
</dbReference>
<dbReference type="GO" id="GO:0006208">
    <property type="term" value="P:pyrimidine nucleobase catabolic process"/>
    <property type="evidence" value="ECO:0007669"/>
    <property type="project" value="TreeGrafter"/>
</dbReference>
<dbReference type="Gene3D" id="2.30.110.10">
    <property type="entry name" value="Electron Transport, Fmn-binding Protein, Chain A"/>
    <property type="match status" value="1"/>
</dbReference>
<dbReference type="InterPro" id="IPR002563">
    <property type="entry name" value="Flavin_Rdtase-like_dom"/>
</dbReference>
<dbReference type="InterPro" id="IPR011982">
    <property type="entry name" value="HPA_mOase_red"/>
</dbReference>
<dbReference type="InterPro" id="IPR050268">
    <property type="entry name" value="NADH-dep_flavin_reductase"/>
</dbReference>
<dbReference type="InterPro" id="IPR012349">
    <property type="entry name" value="Split_barrel_FMN-bd"/>
</dbReference>
<dbReference type="NCBIfam" id="TIGR02296">
    <property type="entry name" value="HpaC"/>
    <property type="match status" value="1"/>
</dbReference>
<dbReference type="NCBIfam" id="NF012030">
    <property type="entry name" value="PRK15486.1"/>
    <property type="match status" value="1"/>
</dbReference>
<dbReference type="PANTHER" id="PTHR30466">
    <property type="entry name" value="FLAVIN REDUCTASE"/>
    <property type="match status" value="1"/>
</dbReference>
<dbReference type="PANTHER" id="PTHR30466:SF1">
    <property type="entry name" value="FMN REDUCTASE (NADH) RUTF"/>
    <property type="match status" value="1"/>
</dbReference>
<dbReference type="Pfam" id="PF01613">
    <property type="entry name" value="Flavin_Reduct"/>
    <property type="match status" value="1"/>
</dbReference>
<dbReference type="SMART" id="SM00903">
    <property type="entry name" value="Flavin_Reduct"/>
    <property type="match status" value="1"/>
</dbReference>
<dbReference type="SUPFAM" id="SSF50475">
    <property type="entry name" value="FMN-binding split barrel"/>
    <property type="match status" value="1"/>
</dbReference>
<reference key="1">
    <citation type="journal article" date="1997" name="Arch. Microbiol.">
        <title>Molecular cloning and analysis of the genes encoding the 4-hydroxyphenylacetate hydroxylase from Klebsiella pneumoniae.</title>
        <authorList>
            <person name="Gibello A."/>
            <person name="Suarez M."/>
            <person name="Allende J.L."/>
            <person name="Martin M."/>
        </authorList>
    </citation>
    <scope>NUCLEOTIDE SEQUENCE [GENOMIC DNA]</scope>
    <source>
        <strain>M5a1</strain>
    </source>
</reference>
<organism>
    <name type="scientific">Klebsiella oxytoca</name>
    <dbReference type="NCBI Taxonomy" id="571"/>
    <lineage>
        <taxon>Bacteria</taxon>
        <taxon>Pseudomonadati</taxon>
        <taxon>Pseudomonadota</taxon>
        <taxon>Gammaproteobacteria</taxon>
        <taxon>Enterobacterales</taxon>
        <taxon>Enterobacteriaceae</taxon>
        <taxon>Klebsiella/Raoultella group</taxon>
        <taxon>Klebsiella</taxon>
    </lineage>
</organism>
<comment type="function">
    <text evidence="1">Catalyzes the reduction of free flavins (FMN, FAD and riboflavin) by NADH. Subsequently, the reduced flavins diffuse to the large HpaB component or to other electron acceptors such as cytochrome c and Fe(3+) ion (By similarity).</text>
</comment>
<comment type="catalytic activity">
    <reaction>
        <text>a reduced flavin + NAD(+) = an oxidized flavin + NADH + 2 H(+)</text>
        <dbReference type="Rhea" id="RHEA:31303"/>
        <dbReference type="ChEBI" id="CHEBI:15378"/>
        <dbReference type="ChEBI" id="CHEBI:57540"/>
        <dbReference type="ChEBI" id="CHEBI:57945"/>
        <dbReference type="ChEBI" id="CHEBI:60531"/>
        <dbReference type="ChEBI" id="CHEBI:62787"/>
        <dbReference type="EC" id="1.5.1.36"/>
    </reaction>
</comment>
<comment type="pathway">
    <text>Aromatic compound metabolism; 4-hydroxyphenylacetate degradation; pyruvate and succinate semialdehyde from 4-hydroxyphenylacetate: step 1/7.</text>
</comment>
<comment type="subunit">
    <text evidence="1">Homodimer. 4-HPA 3-monooxygenase consists of a reductase component HpaC and an oxygenase component HpaB (By similarity).</text>
</comment>
<comment type="induction">
    <text>By 3- or 4-hydroxyphenylacetic acid.</text>
</comment>
<comment type="similarity">
    <text evidence="2">Belongs to the non-flavoprotein flavin reductase family. HpaC subfamily.</text>
</comment>
<feature type="chain" id="PRO_0000085533" description="4-hydroxyphenylacetate 3-monooxygenase reductase component">
    <location>
        <begin position="1"/>
        <end position="170"/>
    </location>
</feature>
<evidence type="ECO:0000250" key="1"/>
<evidence type="ECO:0000305" key="2"/>
<keyword id="KW-0058">Aromatic hydrocarbons catabolism</keyword>
<keyword id="KW-0285">Flavoprotein</keyword>
<keyword id="KW-0288">FMN</keyword>
<keyword id="KW-0520">NAD</keyword>
<keyword id="KW-0560">Oxidoreductase</keyword>
<protein>
    <recommendedName>
        <fullName>4-hydroxyphenylacetate 3-monooxygenase reductase component</fullName>
        <ecNumber>1.5.1.36</ecNumber>
    </recommendedName>
    <alternativeName>
        <fullName>4-HPA 3-monooxygenase small component</fullName>
    </alternativeName>
    <alternativeName>
        <fullName>Flavin:NADH reductase</fullName>
    </alternativeName>
</protein>
<accession>Q48441</accession>
<proteinExistence type="evidence at transcript level"/>
<gene>
    <name type="primary">hpaC</name>
    <name type="synonym">hpaH</name>
</gene>
<sequence>MQLDEQRLRFRDAMASLSPAVNVITTEAEAGAAVSPHRPSCSVTDTPPSVMVCINANSAMNPVFQGNGKLCINVLNHEQEEMARHFAGMTGMTMDDRFGLSGWQKGALGQPVLKGALASLEGEISQVQTIGSHLVYLVEIRNITLSQQGHGLIYFKRRFHPVMMEMDVVA</sequence>
<name>HPAC_KLEOX</name>